<protein>
    <recommendedName>
        <fullName evidence="1">Ribosome-binding factor A</fullName>
    </recommendedName>
</protein>
<name>RBFA_STRA5</name>
<feature type="chain" id="PRO_0000102740" description="Ribosome-binding factor A">
    <location>
        <begin position="1"/>
        <end position="122"/>
    </location>
</feature>
<comment type="function">
    <text evidence="1">One of several proteins that assist in the late maturation steps of the functional core of the 30S ribosomal subunit. Associates with free 30S ribosomal subunits (but not with 30S subunits that are part of 70S ribosomes or polysomes). Required for efficient processing of 16S rRNA. May interact with the 5'-terminal helix region of 16S rRNA.</text>
</comment>
<comment type="subunit">
    <text evidence="1">Monomer. Binds 30S ribosomal subunits, but not 50S ribosomal subunits or 70S ribosomes.</text>
</comment>
<comment type="subcellular location">
    <subcellularLocation>
        <location evidence="1">Cytoplasm</location>
    </subcellularLocation>
</comment>
<comment type="similarity">
    <text evidence="1">Belongs to the RbfA family.</text>
</comment>
<gene>
    <name evidence="1" type="primary">rbfA</name>
    <name type="ordered locus">SAG0382</name>
</gene>
<reference key="1">
    <citation type="journal article" date="2002" name="Proc. Natl. Acad. Sci. U.S.A.">
        <title>Complete genome sequence and comparative genomic analysis of an emerging human pathogen, serotype V Streptococcus agalactiae.</title>
        <authorList>
            <person name="Tettelin H."/>
            <person name="Masignani V."/>
            <person name="Cieslewicz M.J."/>
            <person name="Eisen J.A."/>
            <person name="Peterson S.N."/>
            <person name="Wessels M.R."/>
            <person name="Paulsen I.T."/>
            <person name="Nelson K.E."/>
            <person name="Margarit I."/>
            <person name="Read T.D."/>
            <person name="Madoff L.C."/>
            <person name="Wolf A.M."/>
            <person name="Beanan M.J."/>
            <person name="Brinkac L.M."/>
            <person name="Daugherty S.C."/>
            <person name="DeBoy R.T."/>
            <person name="Durkin A.S."/>
            <person name="Kolonay J.F."/>
            <person name="Madupu R."/>
            <person name="Lewis M.R."/>
            <person name="Radune D."/>
            <person name="Fedorova N.B."/>
            <person name="Scanlan D."/>
            <person name="Khouri H.M."/>
            <person name="Mulligan S."/>
            <person name="Carty H.A."/>
            <person name="Cline R.T."/>
            <person name="Van Aken S.E."/>
            <person name="Gill J."/>
            <person name="Scarselli M."/>
            <person name="Mora M."/>
            <person name="Iacobini E.T."/>
            <person name="Brettoni C."/>
            <person name="Galli G."/>
            <person name="Mariani M."/>
            <person name="Vegni F."/>
            <person name="Maione D."/>
            <person name="Rinaudo D."/>
            <person name="Rappuoli R."/>
            <person name="Telford J.L."/>
            <person name="Kasper D.L."/>
            <person name="Grandi G."/>
            <person name="Fraser C.M."/>
        </authorList>
    </citation>
    <scope>NUCLEOTIDE SEQUENCE [LARGE SCALE GENOMIC DNA]</scope>
    <source>
        <strain>ATCC BAA-611 / 2603 V/R</strain>
    </source>
</reference>
<keyword id="KW-0963">Cytoplasm</keyword>
<keyword id="KW-1185">Reference proteome</keyword>
<keyword id="KW-0690">Ribosome biogenesis</keyword>
<organism>
    <name type="scientific">Streptococcus agalactiae serotype V (strain ATCC BAA-611 / 2603 V/R)</name>
    <dbReference type="NCBI Taxonomy" id="208435"/>
    <lineage>
        <taxon>Bacteria</taxon>
        <taxon>Bacillati</taxon>
        <taxon>Bacillota</taxon>
        <taxon>Bacilli</taxon>
        <taxon>Lactobacillales</taxon>
        <taxon>Streptococcaceae</taxon>
        <taxon>Streptococcus</taxon>
    </lineage>
</organism>
<proteinExistence type="inferred from homology"/>
<evidence type="ECO:0000255" key="1">
    <source>
        <dbReference type="HAMAP-Rule" id="MF_00003"/>
    </source>
</evidence>
<accession>P65970</accession>
<accession>Q8E1H2</accession>
<accession>Q8E6Z0</accession>
<sequence>MKKGLIMANHRIDRVGMEIKREVNEILRLRVNDPRVQDVTITDVQMLGDLSMAKVFYTIHSTLASDNQKAQIGLEKATGTIKRELGKNLTMYKIPDLQFVKDESIEYGNKIDEMLRNLDKKD</sequence>
<dbReference type="EMBL" id="AE009948">
    <property type="protein sequence ID" value="AAM99288.1"/>
    <property type="molecule type" value="Genomic_DNA"/>
</dbReference>
<dbReference type="RefSeq" id="NP_687416.1">
    <property type="nucleotide sequence ID" value="NC_004116.1"/>
</dbReference>
<dbReference type="SMR" id="P65970"/>
<dbReference type="STRING" id="208435.SAG0382"/>
<dbReference type="KEGG" id="sag:SAG0382"/>
<dbReference type="PATRIC" id="fig|208435.3.peg.377"/>
<dbReference type="HOGENOM" id="CLU_089475_3_0_9"/>
<dbReference type="OrthoDB" id="307788at2"/>
<dbReference type="Proteomes" id="UP000000821">
    <property type="component" value="Chromosome"/>
</dbReference>
<dbReference type="GO" id="GO:0005829">
    <property type="term" value="C:cytosol"/>
    <property type="evidence" value="ECO:0007669"/>
    <property type="project" value="TreeGrafter"/>
</dbReference>
<dbReference type="GO" id="GO:0043024">
    <property type="term" value="F:ribosomal small subunit binding"/>
    <property type="evidence" value="ECO:0007669"/>
    <property type="project" value="TreeGrafter"/>
</dbReference>
<dbReference type="GO" id="GO:0030490">
    <property type="term" value="P:maturation of SSU-rRNA"/>
    <property type="evidence" value="ECO:0007669"/>
    <property type="project" value="UniProtKB-UniRule"/>
</dbReference>
<dbReference type="Gene3D" id="3.30.300.20">
    <property type="match status" value="1"/>
</dbReference>
<dbReference type="HAMAP" id="MF_00003">
    <property type="entry name" value="RbfA"/>
    <property type="match status" value="1"/>
</dbReference>
<dbReference type="InterPro" id="IPR015946">
    <property type="entry name" value="KH_dom-like_a/b"/>
</dbReference>
<dbReference type="InterPro" id="IPR000238">
    <property type="entry name" value="RbfA"/>
</dbReference>
<dbReference type="InterPro" id="IPR023799">
    <property type="entry name" value="RbfA_dom_sf"/>
</dbReference>
<dbReference type="InterPro" id="IPR020053">
    <property type="entry name" value="Ribosome-bd_factorA_CS"/>
</dbReference>
<dbReference type="NCBIfam" id="TIGR00082">
    <property type="entry name" value="rbfA"/>
    <property type="match status" value="1"/>
</dbReference>
<dbReference type="PANTHER" id="PTHR33515">
    <property type="entry name" value="RIBOSOME-BINDING FACTOR A, CHLOROPLASTIC-RELATED"/>
    <property type="match status" value="1"/>
</dbReference>
<dbReference type="PANTHER" id="PTHR33515:SF1">
    <property type="entry name" value="RIBOSOME-BINDING FACTOR A, CHLOROPLASTIC-RELATED"/>
    <property type="match status" value="1"/>
</dbReference>
<dbReference type="Pfam" id="PF02033">
    <property type="entry name" value="RBFA"/>
    <property type="match status" value="1"/>
</dbReference>
<dbReference type="SUPFAM" id="SSF89919">
    <property type="entry name" value="Ribosome-binding factor A, RbfA"/>
    <property type="match status" value="1"/>
</dbReference>
<dbReference type="PROSITE" id="PS01319">
    <property type="entry name" value="RBFA"/>
    <property type="match status" value="1"/>
</dbReference>